<protein>
    <recommendedName>
        <fullName evidence="18">Cadherin-5</fullName>
    </recommendedName>
    <alternativeName>
        <fullName evidence="17">Vascular endothelial cadherin</fullName>
        <shortName evidence="16">VE-cadherin</shortName>
    </alternativeName>
    <cdAntigenName>CD144</cdAntigenName>
</protein>
<reference key="1">
    <citation type="journal article" date="1996" name="Blood">
        <title>Molecular cloning and expression of murine vascular endothelial-cadherin in early stage development of cardiovascular system.</title>
        <authorList>
            <person name="Breier G."/>
            <person name="Breviario F."/>
            <person name="Caveda L."/>
            <person name="Berthier R."/>
            <person name="Schnuerch H."/>
            <person name="Gotsch U."/>
            <person name="Vestweber D."/>
            <person name="Risau W."/>
            <person name="Dejana E."/>
        </authorList>
    </citation>
    <scope>NUCLEOTIDE SEQUENCE [MRNA]</scope>
    <source>
        <tissue>Brain capillary</tissue>
    </source>
</reference>
<reference key="2">
    <citation type="submission" date="2003-08" db="EMBL/GenBank/DDBJ databases">
        <authorList>
            <person name="Breviario F."/>
        </authorList>
    </citation>
    <scope>SEQUENCE REVISION TO 67-70</scope>
</reference>
<reference key="3">
    <citation type="journal article" date="1997" name="Proc. Assoc. Am. Physicians">
        <title>In vivo evidence of the critical role of cadherin-5 in murine vascular integrity.</title>
        <authorList>
            <person name="Matsuyoshi N."/>
            <person name="Toda K."/>
            <person name="Horiguchi Y."/>
            <person name="Tanaka T."/>
            <person name="Nakagawa S."/>
            <person name="Takeichi M."/>
            <person name="Imamura S."/>
        </authorList>
    </citation>
    <scope>NUCLEOTIDE SEQUENCE [MRNA]</scope>
    <scope>FUNCTION</scope>
    <source>
        <strain>BALB/cJ</strain>
        <tissue>Mammary carcinoma</tissue>
    </source>
</reference>
<reference key="4">
    <citation type="journal article" date="2004" name="Genome Res.">
        <title>The status, quality, and expansion of the NIH full-length cDNA project: the Mammalian Gene Collection (MGC).</title>
        <authorList>
            <consortium name="The MGC Project Team"/>
        </authorList>
    </citation>
    <scope>NUCLEOTIDE SEQUENCE [LARGE SCALE MRNA]</scope>
    <source>
        <strain>C57BL/6J</strain>
        <tissue>Brain</tissue>
    </source>
</reference>
<reference key="5">
    <citation type="journal article" date="2002" name="EMBO J.">
        <title>VE-PTP and VE-cadherin ectodomains interact to facilitate regulation of phosphorylation and cell contacts.</title>
        <authorList>
            <person name="Nawroth R."/>
            <person name="Poell G."/>
            <person name="Ranft A."/>
            <person name="Kloep S."/>
            <person name="Samulowitz U."/>
            <person name="Fachinger G."/>
            <person name="Golding M."/>
            <person name="Shima D.T."/>
            <person name="Deutsch U."/>
            <person name="Vestweber D."/>
        </authorList>
    </citation>
    <scope>INTERACTION WITH PTPRB</scope>
    <scope>PHOSPHORYLATION</scope>
    <scope>DEPHOSPHORYLATION BY PTPRB</scope>
</reference>
<reference key="6">
    <citation type="journal article" date="2005" name="EMBO J.">
        <authorList>
            <person name="Nawroth R."/>
            <person name="Poell G."/>
            <person name="Ranft A."/>
            <person name="Kloep S."/>
            <person name="Samulowitz U."/>
            <person name="Fachinger G."/>
            <person name="Golding M."/>
            <person name="Shima D.T."/>
            <person name="Deutsch U."/>
            <person name="Vestweber D."/>
        </authorList>
    </citation>
    <scope>ERRATUM OF PUBMED:12234928</scope>
</reference>
<reference key="7">
    <citation type="journal article" date="2009" name="Biochem. Biophys. Res. Commun.">
        <title>Impaired vascular development in the yolk sac and allantois in mice lacking RA-GEF-1.</title>
        <authorList>
            <person name="Kanemura H."/>
            <person name="Satoh T."/>
            <person name="Bilasy S.E."/>
            <person name="Ueda S."/>
            <person name="Hirashima M."/>
            <person name="Kataoka T."/>
        </authorList>
    </citation>
    <scope>SUBCELLULAR LOCATION</scope>
    <scope>DEVELOPMENTAL STAGE</scope>
</reference>
<reference key="8">
    <citation type="journal article" date="2010" name="Cell">
        <title>A tissue-specific atlas of mouse protein phosphorylation and expression.</title>
        <authorList>
            <person name="Huttlin E.L."/>
            <person name="Jedrychowski M.P."/>
            <person name="Elias J.E."/>
            <person name="Goswami T."/>
            <person name="Rad R."/>
            <person name="Beausoleil S.A."/>
            <person name="Villen J."/>
            <person name="Haas W."/>
            <person name="Sowa M.E."/>
            <person name="Gygi S.P."/>
        </authorList>
    </citation>
    <scope>IDENTIFICATION BY MASS SPECTROMETRY [LARGE SCALE ANALYSIS]</scope>
    <source>
        <tissue>Brown adipose tissue</tissue>
        <tissue>Heart</tissue>
        <tissue>Kidney</tissue>
        <tissue>Liver</tissue>
        <tissue>Lung</tissue>
        <tissue>Spleen</tissue>
    </source>
</reference>
<reference key="9">
    <citation type="journal article" date="2010" name="J. Cell Sci.">
        <title>CCM1 regulates vascular-lumen organization by inducing endothelial polarity.</title>
        <authorList>
            <person name="Lampugnani M.G."/>
            <person name="Orsenigo F."/>
            <person name="Rudini N."/>
            <person name="Maddaluno L."/>
            <person name="Boulday G."/>
            <person name="Chapon F."/>
            <person name="Dejana E."/>
        </authorList>
    </citation>
    <scope>FUNCTION</scope>
</reference>
<reference key="10">
    <citation type="journal article" date="2012" name="Development">
        <title>SOX7 regulates the expression of VE-cadherin in the haemogenic endothelium at the onset of haematopoietic development.</title>
        <authorList>
            <person name="Costa G."/>
            <person name="Mazan A."/>
            <person name="Gandillet A."/>
            <person name="Pearson S."/>
            <person name="Lacaud G."/>
            <person name="Kouskoff V."/>
        </authorList>
    </citation>
    <scope>INDUCTION</scope>
    <scope>DEVELOPMENTAL STAGE</scope>
</reference>
<reference key="11">
    <citation type="journal article" date="2014" name="Nat. Commun.">
        <title>AmotL2 links VE-cadherin to contractile actin fibres necessary for aortic lumen expansion.</title>
        <authorList>
            <person name="Hultin S."/>
            <person name="Zheng Y."/>
            <person name="Mojallal M."/>
            <person name="Vertuani S."/>
            <person name="Gentili C."/>
            <person name="Balland M."/>
            <person name="Milloud R."/>
            <person name="Belting H.G."/>
            <person name="Affolter M."/>
            <person name="Helker C.S."/>
            <person name="Adams R.H."/>
            <person name="Herzog W."/>
            <person name="Uhlen P."/>
            <person name="Majumdar A."/>
            <person name="Holmgren L."/>
        </authorList>
    </citation>
    <scope>FUNCTION</scope>
    <scope>IDENTIFICATION IN A COMPLEX WITH AMOTL2 AND MAGI1</scope>
    <scope>INTERACTION WITH AMOTL2 AND MAGI1</scope>
    <scope>SUBCELLULAR LOCATION</scope>
</reference>
<reference key="12">
    <citation type="journal article" date="2016" name="Mol. Biol. Cell">
        <title>VE-cadherin interacts with cell polarity protein Pals1 to regulate vascular lumen formation.</title>
        <authorList>
            <person name="Brinkmann B.F."/>
            <person name="Steinbacher T."/>
            <person name="Hartmann C."/>
            <person name="Kummer D."/>
            <person name="Pajonczyk D."/>
            <person name="Mirzapourshafiyi F."/>
            <person name="Nakayama M."/>
            <person name="Weide T."/>
            <person name="Gerke V."/>
            <person name="Ebnet K."/>
        </authorList>
    </citation>
    <scope>FUNCTION</scope>
    <scope>INTERACTION WITH PALS1</scope>
    <scope>TISSUE SPECIFICITY</scope>
    <scope>MUTAGENESIS OF 621-ARG--ARG-623 AND 624-ILE--LYS-626</scope>
</reference>
<reference key="13">
    <citation type="journal article" date="2017" name="Circ. Res.">
        <title>Polydom Is an Extracellular Matrix Protein Involved in Lymphatic Vessel Remodeling.</title>
        <authorList>
            <person name="Morooka N."/>
            <person name="Futaki S."/>
            <person name="Sato-Nishiuchi R."/>
            <person name="Nishino M."/>
            <person name="Totani Y."/>
            <person name="Shimono C."/>
            <person name="Nakano I."/>
            <person name="Nakajima H."/>
            <person name="Mochizuki N."/>
            <person name="Sekiguchi K."/>
        </authorList>
    </citation>
    <scope>DEVELOPMENTAL STAGE</scope>
</reference>
<reference key="14">
    <citation type="journal article" date="2021" name="Nat. Commun.">
        <title>A junctional PACSIN2/EHD4/MICAL-L1 complex coordinates VE-cadherin trafficking for endothelial migration and angiogenesis.</title>
        <authorList>
            <person name="Malinova T.S."/>
            <person name="Angulo-Urarte A."/>
            <person name="Nuechel J."/>
            <person name="Tauber M."/>
            <person name="van der Stoel M.M."/>
            <person name="Janssen V."/>
            <person name="de Haan A."/>
            <person name="Groenen A.G."/>
            <person name="Tebbens M."/>
            <person name="Graupera M."/>
            <person name="Plomann M."/>
            <person name="Huveneers S."/>
        </authorList>
    </citation>
    <scope>FUNCTION</scope>
    <scope>SUBCELLULAR LOCATION</scope>
    <scope>INTERACTION WITH CTNND1</scope>
</reference>
<reference key="15">
    <citation type="journal article" date="2010" name="Biochemistry">
        <title>Distal interactions within the par3-VE-cadherin complex.</title>
        <authorList>
            <person name="Tyler R.C."/>
            <person name="Peterson F.C."/>
            <person name="Volkman B.F."/>
        </authorList>
    </citation>
    <scope>STRUCTURE BY NMR OF 769-784 IN COMPLEX WITH PARD3</scope>
    <scope>INTERACTION WITH PARD3</scope>
    <scope>MUTAGENESIS OF TYR-774 AND ASP-777</scope>
</reference>
<name>CADH5_MOUSE</name>
<sequence length="784" mass="87903">MQRLTELATALGAFLGLLAVAAMAGPNFPQIDTPNMLPAHHRQKRDWIWNQMHIDEEKNESLPHYVGKIKSNVNRQNAKYVLQGEFAGKIFGVDANTGNVLAYERLDREKVSEYFLTALIVDKNTNKNLEQPSSFTVKVHDINDNWPVFSHQVFNASVPEMSAIGTSVIRVTAVDADDPTVAGHATVLYQIVKGNEYFSIDNSGLIFTKIKNLDREKQAEYKIVVETQDALGLRGESGTATVMIRLEDINDNFPVFTQSTYTFSVPEDIRVGKPLGFLTVVDPDEPQNRMTKYSIMQGEYRDTFTIETDPKRNEGIIKPTKSLDYEVIQQYTFYIEATDPTIRYEYLSSTSGKNKAMVTINVLDVDEPPVFQRHFYHFKLPENQKKPLIGTVVAKDPDKAQRSIGYSIRKTSDRGQFFRITKQGNIYNEKELDRETYAWYNLTVEANELDSRGNPVGKESIVQVYIEVLDENDNPPEFAQPYEPKVCENAAQGKLVVQISATDKDVVPVNPKFKFALKNEDSNFTLINNHDNTANITVKYGQFNREHAKFHYLPVLISDNGVPSLTGTSTLTVGVCKCNEQGEFTFCEEMAAQAGVSIQALVAIFLCILTITVITLLIILRRRIRKQAHAHSKSALEIHEQLVTYDEEGGGEMDTTSYDVSVLNSVRGGSTKPLRSTMDARPAVYTQVQKPPRLAPGLHGGPREMATMIDVKKEEADNDGGGPPYDTLHIYGYEGAESIAESLSSLSTNSSDSDIDYDFLNDWGPRFKMLAELYGSDPQEELII</sequence>
<comment type="function">
    <text evidence="2 3 9 11 12 14 15">Cadherins are calcium-dependent cell adhesion proteins (By similarity). They preferentially interact with themselves in a homophilic manner in connecting cells; cadherins may thus contribute to the sorting of heterogeneous cell types (By similarity). This cadherin may play an important role in endothelial cell biology through control of the cohesion and organization of the intercellular junctions (PubMed:20332120, PubMed:9220534). It associates with alpha-catenin forming a link to the cytoskeleton (By similarity). Plays a role in coupling actin fibers to cell junctions in endothelial cells, via acting as a cell junctional complex anchor for AMOTL2 and MAGI1 (PubMed:24806444). Acts in concert with KRIT1 and PALS1 to establish and maintain correct endothelial cell polarity and vascular lumen (PubMed:27466317). These effects are mediated by recruitment and activation of the Par polarity complex and RAP1B (By similarity). Required for activation of PRKCZ and for localization of phosphorylated PRKCZ, PARD3, TIAM1 and RAP1B to the cell junction (By similarity). Associates with CTNND1/p120-catenin to control CADH5 endocytosis (PubMed:33972531).</text>
</comment>
<comment type="subunit">
    <text evidence="2 6 8 11 12 14">Part of a complex composed of AMOTL2, MAGI1 and CDH5, within the complex AMOTL2 acts as a scaffold protein for the interaction of MAGI1 with CDH5 (PubMed:24806444). The complex is required for coupling actin fibers to cell junctions in endothelial cells (PubMed:24806444). Within the complex AMOTL2 (via its N-terminus) interacts with CDH5 (PubMed:24806444). Interacts (via cadherin 5 domain) with PTPRB (PubMed:12234928). Interacts with TRPC4 (By similarity). Interacts with KRIT1 (By similarity). Interacts with PARD3 (PubMed:20047332). Interacts with RTN4 (isoform B) (By similarity). Interacts with PALS1; the interaction promotes PALS1 localization to cell junctions and is required for CDH5-mediated vascular lumen formation and endothelial cell polarity (PubMed:27466317). Interacts with CTNND1/p120-catenin; the interaction controls CADH5 endocytosis (PubMed:33972531).</text>
</comment>
<comment type="interaction">
    <interactant intactId="EBI-7087433">
        <id>P55284</id>
    </interactant>
    <interactant intactId="EBI-2899393">
        <id>Q64729</id>
        <label>Tgfbr1</label>
    </interactant>
    <organismsDiffer>false</organismsDiffer>
    <experiments>2</experiments>
</comment>
<comment type="interaction">
    <interactant intactId="EBI-7087433">
        <id>P55284</id>
    </interactant>
    <interactant intactId="EBI-2899332">
        <id>Q62312</id>
        <label>Tgfbr2</label>
    </interactant>
    <organismsDiffer>false</organismsDiffer>
    <experiments>4</experiments>
</comment>
<comment type="subcellular location">
    <subcellularLocation>
        <location evidence="7 11 14">Cell junction</location>
        <location evidence="7 11 14">Adherens junction</location>
    </subcellularLocation>
    <subcellularLocation>
        <location evidence="7">Cell membrane</location>
        <topology evidence="7">Single-pass type I membrane protein</topology>
    </subcellularLocation>
    <subcellularLocation>
        <location evidence="11">Cytoplasm</location>
    </subcellularLocation>
    <text evidence="2">Found at cell-cell boundaries and probably at cell-matrix boundaries. KRIT1 and CDH5 reciprocally regulate their localization to endothelial cell-cell junctions (By similarity).</text>
</comment>
<comment type="tissue specificity">
    <text evidence="12">Expressed in postnatal endothelial cells of the retinal vascular plexus (at protein level).</text>
</comment>
<comment type="developmental stage">
    <text evidence="7 10 13">Expressed in endothelial cells of allantois/umbilical vessels at 8.5 dpc (at protein level) (PubMed:19635461). During hemangioblast differentiation, expressed in hemogenic endothelium cells and down-regulated in nascent blood precursors (PubMed:22492353). Expressed in the mesentery lymphatic vessels at 18.5 dpc (PubMed:28179430).</text>
</comment>
<comment type="induction">
    <text evidence="10">Up-regulated by SOX7.</text>
</comment>
<comment type="domain">
    <text evidence="1">Three calcium ions are usually bound at the interface of each cadherin domain and rigidify the connections, imparting a strong curvature to the full-length ectodomain.</text>
</comment>
<comment type="PTM">
    <text evidence="6">Phosphorylated on tyrosine residues by KDR/VEGFR-2. Dephosphorylated by PTPRB.</text>
</comment>
<comment type="PTM">
    <text evidence="1">O-glycosylated.</text>
</comment>
<organism>
    <name type="scientific">Mus musculus</name>
    <name type="common">Mouse</name>
    <dbReference type="NCBI Taxonomy" id="10090"/>
    <lineage>
        <taxon>Eukaryota</taxon>
        <taxon>Metazoa</taxon>
        <taxon>Chordata</taxon>
        <taxon>Craniata</taxon>
        <taxon>Vertebrata</taxon>
        <taxon>Euteleostomi</taxon>
        <taxon>Mammalia</taxon>
        <taxon>Eutheria</taxon>
        <taxon>Euarchontoglires</taxon>
        <taxon>Glires</taxon>
        <taxon>Rodentia</taxon>
        <taxon>Myomorpha</taxon>
        <taxon>Muroidea</taxon>
        <taxon>Muridae</taxon>
        <taxon>Murinae</taxon>
        <taxon>Mus</taxon>
        <taxon>Mus</taxon>
    </lineage>
</organism>
<feature type="signal peptide" evidence="4">
    <location>
        <begin position="1"/>
        <end position="24"/>
    </location>
</feature>
<feature type="propeptide" id="PRO_0000003757" evidence="4">
    <location>
        <begin position="25"/>
        <end position="45"/>
    </location>
</feature>
<feature type="chain" id="PRO_0000003758" description="Cadherin-5">
    <location>
        <begin position="46"/>
        <end position="784"/>
    </location>
</feature>
<feature type="topological domain" description="Extracellular" evidence="4">
    <location>
        <begin position="46"/>
        <end position="599"/>
    </location>
</feature>
<feature type="transmembrane region" description="Helical" evidence="4">
    <location>
        <begin position="600"/>
        <end position="620"/>
    </location>
</feature>
<feature type="topological domain" description="Cytoplasmic" evidence="4">
    <location>
        <begin position="621"/>
        <end position="784"/>
    </location>
</feature>
<feature type="domain" description="Cadherin 1" evidence="5">
    <location>
        <begin position="46"/>
        <end position="149"/>
    </location>
</feature>
<feature type="domain" description="Cadherin 2" evidence="5">
    <location>
        <begin position="150"/>
        <end position="256"/>
    </location>
</feature>
<feature type="domain" description="Cadherin 3" evidence="5">
    <location>
        <begin position="257"/>
        <end position="371"/>
    </location>
</feature>
<feature type="domain" description="Cadherin 4" evidence="5">
    <location>
        <begin position="372"/>
        <end position="476"/>
    </location>
</feature>
<feature type="domain" description="Cadherin 5" evidence="5">
    <location>
        <begin position="477"/>
        <end position="593"/>
    </location>
</feature>
<feature type="region of interest" description="Required for interaction with PALS1" evidence="12">
    <location>
        <begin position="621"/>
        <end position="660"/>
    </location>
</feature>
<feature type="binding site" evidence="3">
    <location>
        <position position="56"/>
    </location>
    <ligand>
        <name>Ca(2+)</name>
        <dbReference type="ChEBI" id="CHEBI:29108"/>
        <label>1</label>
    </ligand>
</feature>
<feature type="binding site" evidence="3">
    <location>
        <position position="56"/>
    </location>
    <ligand>
        <name>Ca(2+)</name>
        <dbReference type="ChEBI" id="CHEBI:29108"/>
        <label>2</label>
    </ligand>
</feature>
<feature type="binding site" evidence="3">
    <location>
        <position position="57"/>
    </location>
    <ligand>
        <name>Ca(2+)</name>
        <dbReference type="ChEBI" id="CHEBI:29108"/>
        <label>1</label>
    </ligand>
</feature>
<feature type="binding site" evidence="3">
    <location>
        <position position="107"/>
    </location>
    <ligand>
        <name>Ca(2+)</name>
        <dbReference type="ChEBI" id="CHEBI:29108"/>
        <label>1</label>
    </ligand>
</feature>
<feature type="binding site" evidence="3">
    <location>
        <position position="109"/>
    </location>
    <ligand>
        <name>Ca(2+)</name>
        <dbReference type="ChEBI" id="CHEBI:29108"/>
        <label>1</label>
    </ligand>
</feature>
<feature type="binding site" evidence="3">
    <location>
        <position position="109"/>
    </location>
    <ligand>
        <name>Ca(2+)</name>
        <dbReference type="ChEBI" id="CHEBI:29108"/>
        <label>2</label>
    </ligand>
</feature>
<feature type="binding site" evidence="3">
    <location>
        <position position="141"/>
    </location>
    <ligand>
        <name>Ca(2+)</name>
        <dbReference type="ChEBI" id="CHEBI:29108"/>
        <label>2</label>
    </ligand>
</feature>
<feature type="binding site" evidence="3">
    <location>
        <position position="142"/>
    </location>
    <ligand>
        <name>Ca(2+)</name>
        <dbReference type="ChEBI" id="CHEBI:29108"/>
        <label>2</label>
    </ligand>
</feature>
<feature type="binding site" evidence="3">
    <location>
        <position position="143"/>
    </location>
    <ligand>
        <name>Ca(2+)</name>
        <dbReference type="ChEBI" id="CHEBI:29108"/>
        <label>3</label>
    </ligand>
</feature>
<feature type="binding site" evidence="3">
    <location>
        <position position="144"/>
    </location>
    <ligand>
        <name>Ca(2+)</name>
        <dbReference type="ChEBI" id="CHEBI:29108"/>
        <label>1</label>
    </ligand>
</feature>
<feature type="binding site" evidence="3">
    <location>
        <position position="144"/>
    </location>
    <ligand>
        <name>Ca(2+)</name>
        <dbReference type="ChEBI" id="CHEBI:29108"/>
        <label>2</label>
    </ligand>
</feature>
<feature type="binding site" evidence="3">
    <location>
        <position position="145"/>
    </location>
    <ligand>
        <name>Ca(2+)</name>
        <dbReference type="ChEBI" id="CHEBI:29108"/>
        <label>3</label>
    </ligand>
</feature>
<feature type="binding site" evidence="3">
    <location>
        <position position="175"/>
    </location>
    <ligand>
        <name>Ca(2+)</name>
        <dbReference type="ChEBI" id="CHEBI:29108"/>
        <label>3</label>
    </ligand>
</feature>
<feature type="binding site" evidence="3">
    <location>
        <position position="177"/>
    </location>
    <ligand>
        <name>Ca(2+)</name>
        <dbReference type="ChEBI" id="CHEBI:29108"/>
        <label>2</label>
    </ligand>
</feature>
<feature type="binding site" evidence="3">
    <location>
        <position position="177"/>
    </location>
    <ligand>
        <name>Ca(2+)</name>
        <dbReference type="ChEBI" id="CHEBI:29108"/>
        <label>3</label>
    </ligand>
</feature>
<feature type="binding site" evidence="3">
    <location>
        <position position="184"/>
    </location>
    <ligand>
        <name>Ca(2+)</name>
        <dbReference type="ChEBI" id="CHEBI:29108"/>
        <label>3</label>
    </ligand>
</feature>
<feature type="binding site" evidence="3">
    <location>
        <position position="229"/>
    </location>
    <ligand>
        <name>Ca(2+)</name>
        <dbReference type="ChEBI" id="CHEBI:29108"/>
        <label>3</label>
    </ligand>
</feature>
<feature type="glycosylation site" description="N-linked (GlcNAc...) asparagine" evidence="4">
    <location>
        <position position="59"/>
    </location>
</feature>
<feature type="glycosylation site" description="N-linked (GlcNAc...) asparagine" evidence="4">
    <location>
        <position position="155"/>
    </location>
</feature>
<feature type="glycosylation site" description="N-linked (GlcNAc...) asparagine" evidence="4">
    <location>
        <position position="441"/>
    </location>
</feature>
<feature type="glycosylation site" description="N-linked (GlcNAc...) asparagine" evidence="4">
    <location>
        <position position="523"/>
    </location>
</feature>
<feature type="glycosylation site" description="N-linked (GlcNAc...) asparagine" evidence="4">
    <location>
        <position position="535"/>
    </location>
</feature>
<feature type="mutagenesis site" description="Abolishes interaction with PALS1." evidence="12">
    <original>RRR</original>
    <variation>AAA</variation>
    <location>
        <begin position="621"/>
        <end position="623"/>
    </location>
</feature>
<feature type="mutagenesis site" description="Abolishes interaction with PALS1." evidence="12">
    <original>IRK</original>
    <variation>AAA</variation>
    <location>
        <begin position="624"/>
        <end position="626"/>
    </location>
</feature>
<feature type="mutagenesis site" description="No effect on PARD3 binding." evidence="8">
    <original>Y</original>
    <variation>A</variation>
    <location>
        <position position="774"/>
    </location>
</feature>
<feature type="mutagenesis site" description="Impairs PARD3 binding." evidence="8">
    <original>D</original>
    <variation>A</variation>
    <location>
        <position position="777"/>
    </location>
</feature>
<feature type="strand" evidence="19">
    <location>
        <begin position="773"/>
        <end position="776"/>
    </location>
</feature>
<feature type="strand" evidence="19">
    <location>
        <begin position="781"/>
        <end position="783"/>
    </location>
</feature>
<gene>
    <name evidence="18" type="primary">Cdh5</name>
</gene>
<dbReference type="EMBL" id="X83930">
    <property type="protein sequence ID" value="CAA58782.2"/>
    <property type="molecule type" value="mRNA"/>
</dbReference>
<dbReference type="EMBL" id="D63942">
    <property type="protein sequence ID" value="BAA22617.1"/>
    <property type="molecule type" value="mRNA"/>
</dbReference>
<dbReference type="EMBL" id="BC054790">
    <property type="protein sequence ID" value="AAH54790.1"/>
    <property type="molecule type" value="mRNA"/>
</dbReference>
<dbReference type="CCDS" id="CCDS22572.1"/>
<dbReference type="RefSeq" id="NP_033998.2">
    <property type="nucleotide sequence ID" value="NM_009868.4"/>
</dbReference>
<dbReference type="RefSeq" id="XP_006530693.1">
    <property type="nucleotide sequence ID" value="XM_006530630.2"/>
</dbReference>
<dbReference type="PDB" id="2KOH">
    <property type="method" value="NMR"/>
    <property type="chains" value="B=769-784"/>
</dbReference>
<dbReference type="PDBsum" id="2KOH"/>
<dbReference type="BMRB" id="P55284"/>
<dbReference type="SMR" id="P55284"/>
<dbReference type="BioGRID" id="198640">
    <property type="interactions" value="4"/>
</dbReference>
<dbReference type="ELM" id="P55284"/>
<dbReference type="FunCoup" id="P55284">
    <property type="interactions" value="339"/>
</dbReference>
<dbReference type="IntAct" id="P55284">
    <property type="interactions" value="9"/>
</dbReference>
<dbReference type="MINT" id="P55284"/>
<dbReference type="STRING" id="10090.ENSMUSP00000034339"/>
<dbReference type="GlyCosmos" id="P55284">
    <property type="glycosylation" value="5 sites, No reported glycans"/>
</dbReference>
<dbReference type="GlyGen" id="P55284">
    <property type="glycosylation" value="5 sites, 2 N-linked glycans (2 sites)"/>
</dbReference>
<dbReference type="iPTMnet" id="P55284"/>
<dbReference type="PhosphoSitePlus" id="P55284"/>
<dbReference type="CPTAC" id="non-CPTAC-3316"/>
<dbReference type="PaxDb" id="10090-ENSMUSP00000034339"/>
<dbReference type="PeptideAtlas" id="P55284"/>
<dbReference type="ProteomicsDB" id="273579"/>
<dbReference type="Antibodypedia" id="3717">
    <property type="antibodies" value="1286 antibodies from 45 providers"/>
</dbReference>
<dbReference type="DNASU" id="12562"/>
<dbReference type="Ensembl" id="ENSMUST00000034339.10">
    <property type="protein sequence ID" value="ENSMUSP00000034339.9"/>
    <property type="gene ID" value="ENSMUSG00000031871.10"/>
</dbReference>
<dbReference type="GeneID" id="12562"/>
<dbReference type="KEGG" id="mmu:12562"/>
<dbReference type="UCSC" id="uc009mzx.2">
    <property type="organism name" value="mouse"/>
</dbReference>
<dbReference type="AGR" id="MGI:105057"/>
<dbReference type="CTD" id="1003"/>
<dbReference type="MGI" id="MGI:105057">
    <property type="gene designation" value="Cdh5"/>
</dbReference>
<dbReference type="VEuPathDB" id="HostDB:ENSMUSG00000031871"/>
<dbReference type="eggNOG" id="KOG3594">
    <property type="taxonomic scope" value="Eukaryota"/>
</dbReference>
<dbReference type="GeneTree" id="ENSGT00940000160587"/>
<dbReference type="HOGENOM" id="CLU_005284_3_2_1"/>
<dbReference type="InParanoid" id="P55284"/>
<dbReference type="OMA" id="DCPIGIN"/>
<dbReference type="OrthoDB" id="6252479at2759"/>
<dbReference type="PhylomeDB" id="P55284"/>
<dbReference type="TreeFam" id="TF329887"/>
<dbReference type="Reactome" id="R-MMU-418990">
    <property type="pathway name" value="Adherens junctions interactions"/>
</dbReference>
<dbReference type="Reactome" id="R-MMU-5218920">
    <property type="pathway name" value="VEGFR2 mediated vascular permeability"/>
</dbReference>
<dbReference type="BioGRID-ORCS" id="12562">
    <property type="hits" value="3 hits in 79 CRISPR screens"/>
</dbReference>
<dbReference type="ChiTaRS" id="Cdh5">
    <property type="organism name" value="mouse"/>
</dbReference>
<dbReference type="PRO" id="PR:P55284"/>
<dbReference type="Proteomes" id="UP000000589">
    <property type="component" value="Chromosome 8"/>
</dbReference>
<dbReference type="RNAct" id="P55284">
    <property type="molecule type" value="protein"/>
</dbReference>
<dbReference type="Bgee" id="ENSMUSG00000031871">
    <property type="expression patterns" value="Expressed in ectoplacental cone and 222 other cell types or tissues"/>
</dbReference>
<dbReference type="ExpressionAtlas" id="P55284">
    <property type="expression patterns" value="baseline and differential"/>
</dbReference>
<dbReference type="GO" id="GO:0005912">
    <property type="term" value="C:adherens junction"/>
    <property type="evidence" value="ECO:0000314"/>
    <property type="project" value="UniProtKB"/>
</dbReference>
<dbReference type="GO" id="GO:0005923">
    <property type="term" value="C:bicellular tight junction"/>
    <property type="evidence" value="ECO:0000314"/>
    <property type="project" value="MGI"/>
</dbReference>
<dbReference type="GO" id="GO:0030054">
    <property type="term" value="C:cell junction"/>
    <property type="evidence" value="ECO:0000314"/>
    <property type="project" value="UniProtKB"/>
</dbReference>
<dbReference type="GO" id="GO:0071944">
    <property type="term" value="C:cell periphery"/>
    <property type="evidence" value="ECO:0000314"/>
    <property type="project" value="MGI"/>
</dbReference>
<dbReference type="GO" id="GO:0005911">
    <property type="term" value="C:cell-cell junction"/>
    <property type="evidence" value="ECO:0000314"/>
    <property type="project" value="MGI"/>
</dbReference>
<dbReference type="GO" id="GO:0005737">
    <property type="term" value="C:cytoplasm"/>
    <property type="evidence" value="ECO:0000314"/>
    <property type="project" value="UniProtKB"/>
</dbReference>
<dbReference type="GO" id="GO:0009897">
    <property type="term" value="C:external side of plasma membrane"/>
    <property type="evidence" value="ECO:0000314"/>
    <property type="project" value="MGI"/>
</dbReference>
<dbReference type="GO" id="GO:0031965">
    <property type="term" value="C:nuclear membrane"/>
    <property type="evidence" value="ECO:0007669"/>
    <property type="project" value="Ensembl"/>
</dbReference>
<dbReference type="GO" id="GO:0005654">
    <property type="term" value="C:nucleoplasm"/>
    <property type="evidence" value="ECO:0007669"/>
    <property type="project" value="Ensembl"/>
</dbReference>
<dbReference type="GO" id="GO:0005886">
    <property type="term" value="C:plasma membrane"/>
    <property type="evidence" value="ECO:0000314"/>
    <property type="project" value="CAFA"/>
</dbReference>
<dbReference type="GO" id="GO:0008013">
    <property type="term" value="F:beta-catenin binding"/>
    <property type="evidence" value="ECO:0007669"/>
    <property type="project" value="Ensembl"/>
</dbReference>
<dbReference type="GO" id="GO:0070700">
    <property type="term" value="F:BMP receptor binding"/>
    <property type="evidence" value="ECO:0007669"/>
    <property type="project" value="Ensembl"/>
</dbReference>
<dbReference type="GO" id="GO:0005509">
    <property type="term" value="F:calcium ion binding"/>
    <property type="evidence" value="ECO:0007669"/>
    <property type="project" value="InterPro"/>
</dbReference>
<dbReference type="GO" id="GO:0098632">
    <property type="term" value="F:cell-cell adhesion mediator activity"/>
    <property type="evidence" value="ECO:0000314"/>
    <property type="project" value="UniProt"/>
</dbReference>
<dbReference type="GO" id="GO:0070051">
    <property type="term" value="F:fibrinogen binding"/>
    <property type="evidence" value="ECO:0007669"/>
    <property type="project" value="Ensembl"/>
</dbReference>
<dbReference type="GO" id="GO:0019903">
    <property type="term" value="F:protein phosphatase binding"/>
    <property type="evidence" value="ECO:0000353"/>
    <property type="project" value="UniProtKB"/>
</dbReference>
<dbReference type="GO" id="GO:1990782">
    <property type="term" value="F:protein tyrosine kinase binding"/>
    <property type="evidence" value="ECO:0007669"/>
    <property type="project" value="Ensembl"/>
</dbReference>
<dbReference type="GO" id="GO:0030159">
    <property type="term" value="F:signaling receptor complex adaptor activity"/>
    <property type="evidence" value="ECO:0007669"/>
    <property type="project" value="Ensembl"/>
</dbReference>
<dbReference type="GO" id="GO:0044325">
    <property type="term" value="F:transmembrane transporter binding"/>
    <property type="evidence" value="ECO:0007669"/>
    <property type="project" value="Ensembl"/>
</dbReference>
<dbReference type="GO" id="GO:0043184">
    <property type="term" value="F:vascular endothelial growth factor receptor 2 binding"/>
    <property type="evidence" value="ECO:0007669"/>
    <property type="project" value="Ensembl"/>
</dbReference>
<dbReference type="GO" id="GO:0034332">
    <property type="term" value="P:adherens junction organization"/>
    <property type="evidence" value="ECO:0007669"/>
    <property type="project" value="Ensembl"/>
</dbReference>
<dbReference type="GO" id="GO:0070830">
    <property type="term" value="P:bicellular tight junction assembly"/>
    <property type="evidence" value="ECO:0007669"/>
    <property type="project" value="Ensembl"/>
</dbReference>
<dbReference type="GO" id="GO:0001955">
    <property type="term" value="P:blood vessel maturation"/>
    <property type="evidence" value="ECO:0000315"/>
    <property type="project" value="MGI"/>
</dbReference>
<dbReference type="GO" id="GO:0002042">
    <property type="term" value="P:cell migration involved in sprouting angiogenesis"/>
    <property type="evidence" value="ECO:0000314"/>
    <property type="project" value="UniProt"/>
</dbReference>
<dbReference type="GO" id="GO:0098609">
    <property type="term" value="P:cell-cell adhesion"/>
    <property type="evidence" value="ECO:0000315"/>
    <property type="project" value="MGI"/>
</dbReference>
<dbReference type="GO" id="GO:0044331">
    <property type="term" value="P:cell-cell adhesion mediated by cadherin"/>
    <property type="evidence" value="ECO:0007669"/>
    <property type="project" value="Ensembl"/>
</dbReference>
<dbReference type="GO" id="GO:0001886">
    <property type="term" value="P:endothelial cell morphogenesis"/>
    <property type="evidence" value="ECO:0000315"/>
    <property type="project" value="UniProtKB"/>
</dbReference>
<dbReference type="GO" id="GO:0007156">
    <property type="term" value="P:homophilic cell adhesion via plasma membrane adhesion molecules"/>
    <property type="evidence" value="ECO:0007669"/>
    <property type="project" value="InterPro"/>
</dbReference>
<dbReference type="GO" id="GO:0006874">
    <property type="term" value="P:intracellular calcium ion homeostasis"/>
    <property type="evidence" value="ECO:0007669"/>
    <property type="project" value="Ensembl"/>
</dbReference>
<dbReference type="GO" id="GO:0008285">
    <property type="term" value="P:negative regulation of cell population proliferation"/>
    <property type="evidence" value="ECO:0000316"/>
    <property type="project" value="MGI"/>
</dbReference>
<dbReference type="GO" id="GO:2000352">
    <property type="term" value="P:negative regulation of endothelial cell apoptotic process"/>
    <property type="evidence" value="ECO:0007669"/>
    <property type="project" value="Ensembl"/>
</dbReference>
<dbReference type="GO" id="GO:0050728">
    <property type="term" value="P:negative regulation of inflammatory response"/>
    <property type="evidence" value="ECO:0007669"/>
    <property type="project" value="Ensembl"/>
</dbReference>
<dbReference type="GO" id="GO:0031115">
    <property type="term" value="P:negative regulation of microtubule polymerization"/>
    <property type="evidence" value="ECO:0007669"/>
    <property type="project" value="Ensembl"/>
</dbReference>
<dbReference type="GO" id="GO:0045766">
    <property type="term" value="P:positive regulation of angiogenesis"/>
    <property type="evidence" value="ECO:0007669"/>
    <property type="project" value="Ensembl"/>
</dbReference>
<dbReference type="GO" id="GO:0030513">
    <property type="term" value="P:positive regulation of BMP signaling pathway"/>
    <property type="evidence" value="ECO:0007669"/>
    <property type="project" value="Ensembl"/>
</dbReference>
<dbReference type="GO" id="GO:0030335">
    <property type="term" value="P:positive regulation of cell migration"/>
    <property type="evidence" value="ECO:0007669"/>
    <property type="project" value="Ensembl"/>
</dbReference>
<dbReference type="GO" id="GO:1903142">
    <property type="term" value="P:positive regulation of establishment of endothelial barrier"/>
    <property type="evidence" value="ECO:0007669"/>
    <property type="project" value="Ensembl"/>
</dbReference>
<dbReference type="GO" id="GO:0010628">
    <property type="term" value="P:positive regulation of gene expression"/>
    <property type="evidence" value="ECO:0007669"/>
    <property type="project" value="Ensembl"/>
</dbReference>
<dbReference type="GO" id="GO:1902533">
    <property type="term" value="P:positive regulation of intracellular signal transduction"/>
    <property type="evidence" value="ECO:0007669"/>
    <property type="project" value="Ensembl"/>
</dbReference>
<dbReference type="GO" id="GO:0031334">
    <property type="term" value="P:positive regulation of protein-containing complex assembly"/>
    <property type="evidence" value="ECO:0007669"/>
    <property type="project" value="Ensembl"/>
</dbReference>
<dbReference type="GO" id="GO:1902396">
    <property type="term" value="P:protein localization to bicellular tight junction"/>
    <property type="evidence" value="ECO:0007669"/>
    <property type="project" value="Ensembl"/>
</dbReference>
<dbReference type="GO" id="GO:2000114">
    <property type="term" value="P:regulation of establishment of cell polarity"/>
    <property type="evidence" value="ECO:0000315"/>
    <property type="project" value="UniProtKB"/>
</dbReference>
<dbReference type="GO" id="GO:0043114">
    <property type="term" value="P:regulation of vascular permeability"/>
    <property type="evidence" value="ECO:0007669"/>
    <property type="project" value="Ensembl"/>
</dbReference>
<dbReference type="GO" id="GO:0007179">
    <property type="term" value="P:transforming growth factor beta receptor signaling pathway"/>
    <property type="evidence" value="ECO:0007669"/>
    <property type="project" value="Ensembl"/>
</dbReference>
<dbReference type="CDD" id="cd11304">
    <property type="entry name" value="Cadherin_repeat"/>
    <property type="match status" value="5"/>
</dbReference>
<dbReference type="FunFam" id="2.60.40.60:FF:000012">
    <property type="entry name" value="Cadherin 24"/>
    <property type="match status" value="1"/>
</dbReference>
<dbReference type="FunFam" id="2.60.40.60:FF:000017">
    <property type="entry name" value="Cadherin 24"/>
    <property type="match status" value="1"/>
</dbReference>
<dbReference type="FunFam" id="2.60.40.60:FF:000217">
    <property type="entry name" value="Cadherin 5"/>
    <property type="match status" value="1"/>
</dbReference>
<dbReference type="FunFam" id="2.60.40.60:FF:000219">
    <property type="entry name" value="Cadherin 5"/>
    <property type="match status" value="1"/>
</dbReference>
<dbReference type="FunFam" id="4.10.900.10:FF:000008">
    <property type="entry name" value="Cadherin 5"/>
    <property type="match status" value="1"/>
</dbReference>
<dbReference type="FunFam" id="2.60.40.60:FF:000014">
    <property type="entry name" value="Cadherin 8"/>
    <property type="match status" value="1"/>
</dbReference>
<dbReference type="Gene3D" id="2.60.40.60">
    <property type="entry name" value="Cadherins"/>
    <property type="match status" value="5"/>
</dbReference>
<dbReference type="Gene3D" id="4.10.900.10">
    <property type="entry name" value="TCF3-CBD (Catenin binding domain)"/>
    <property type="match status" value="1"/>
</dbReference>
<dbReference type="InterPro" id="IPR039808">
    <property type="entry name" value="Cadherin"/>
</dbReference>
<dbReference type="InterPro" id="IPR002126">
    <property type="entry name" value="Cadherin-like_dom"/>
</dbReference>
<dbReference type="InterPro" id="IPR015919">
    <property type="entry name" value="Cadherin-like_sf"/>
</dbReference>
<dbReference type="InterPro" id="IPR020894">
    <property type="entry name" value="Cadherin_CS"/>
</dbReference>
<dbReference type="InterPro" id="IPR000233">
    <property type="entry name" value="Cadherin_Y-type_LIR"/>
</dbReference>
<dbReference type="InterPro" id="IPR027397">
    <property type="entry name" value="Catenin-bd_sf"/>
</dbReference>
<dbReference type="PANTHER" id="PTHR24027">
    <property type="entry name" value="CADHERIN-23"/>
    <property type="match status" value="1"/>
</dbReference>
<dbReference type="PANTHER" id="PTHR24027:SF89">
    <property type="entry name" value="CADHERIN-5"/>
    <property type="match status" value="1"/>
</dbReference>
<dbReference type="Pfam" id="PF01049">
    <property type="entry name" value="CADH_Y-type_LIR"/>
    <property type="match status" value="1"/>
</dbReference>
<dbReference type="Pfam" id="PF00028">
    <property type="entry name" value="Cadherin"/>
    <property type="match status" value="5"/>
</dbReference>
<dbReference type="PRINTS" id="PR00205">
    <property type="entry name" value="CADHERIN"/>
</dbReference>
<dbReference type="SMART" id="SM00112">
    <property type="entry name" value="CA"/>
    <property type="match status" value="5"/>
</dbReference>
<dbReference type="SUPFAM" id="SSF49313">
    <property type="entry name" value="Cadherin-like"/>
    <property type="match status" value="5"/>
</dbReference>
<dbReference type="PROSITE" id="PS00232">
    <property type="entry name" value="CADHERIN_1"/>
    <property type="match status" value="3"/>
</dbReference>
<dbReference type="PROSITE" id="PS50268">
    <property type="entry name" value="CADHERIN_2"/>
    <property type="match status" value="5"/>
</dbReference>
<evidence type="ECO:0000250" key="1"/>
<evidence type="ECO:0000250" key="2">
    <source>
        <dbReference type="UniProtKB" id="P33151"/>
    </source>
</evidence>
<evidence type="ECO:0000250" key="3">
    <source>
        <dbReference type="UniProtKB" id="Q8AYD0"/>
    </source>
</evidence>
<evidence type="ECO:0000255" key="4"/>
<evidence type="ECO:0000255" key="5">
    <source>
        <dbReference type="PROSITE-ProRule" id="PRU00043"/>
    </source>
</evidence>
<evidence type="ECO:0000269" key="6">
    <source>
    </source>
</evidence>
<evidence type="ECO:0000269" key="7">
    <source>
    </source>
</evidence>
<evidence type="ECO:0000269" key="8">
    <source>
    </source>
</evidence>
<evidence type="ECO:0000269" key="9">
    <source>
    </source>
</evidence>
<evidence type="ECO:0000269" key="10">
    <source>
    </source>
</evidence>
<evidence type="ECO:0000269" key="11">
    <source>
    </source>
</evidence>
<evidence type="ECO:0000269" key="12">
    <source>
    </source>
</evidence>
<evidence type="ECO:0000269" key="13">
    <source>
    </source>
</evidence>
<evidence type="ECO:0000269" key="14">
    <source>
    </source>
</evidence>
<evidence type="ECO:0000269" key="15">
    <source>
    </source>
</evidence>
<evidence type="ECO:0000303" key="16">
    <source>
    </source>
</evidence>
<evidence type="ECO:0000303" key="17">
    <source>
    </source>
</evidence>
<evidence type="ECO:0000312" key="18">
    <source>
        <dbReference type="MGI" id="MGI:105057"/>
    </source>
</evidence>
<evidence type="ECO:0007829" key="19">
    <source>
        <dbReference type="PDB" id="2KOH"/>
    </source>
</evidence>
<accession>P55284</accession>
<accession>O35542</accession>
<proteinExistence type="evidence at protein level"/>
<keyword id="KW-0002">3D-structure</keyword>
<keyword id="KW-0106">Calcium</keyword>
<keyword id="KW-0130">Cell adhesion</keyword>
<keyword id="KW-0965">Cell junction</keyword>
<keyword id="KW-1003">Cell membrane</keyword>
<keyword id="KW-0165">Cleavage on pair of basic residues</keyword>
<keyword id="KW-0963">Cytoplasm</keyword>
<keyword id="KW-0325">Glycoprotein</keyword>
<keyword id="KW-0472">Membrane</keyword>
<keyword id="KW-0479">Metal-binding</keyword>
<keyword id="KW-0597">Phosphoprotein</keyword>
<keyword id="KW-1185">Reference proteome</keyword>
<keyword id="KW-0677">Repeat</keyword>
<keyword id="KW-0732">Signal</keyword>
<keyword id="KW-0812">Transmembrane</keyword>
<keyword id="KW-1133">Transmembrane helix</keyword>